<feature type="chain" id="PRO_0000408213" description="Oxidant-induced cell-cycle arrest protein 5">
    <location>
        <begin position="1"/>
        <end position="566"/>
    </location>
</feature>
<feature type="domain" description="Rab-GAP TBC">
    <location>
        <begin position="50"/>
        <end position="336"/>
    </location>
</feature>
<feature type="region of interest" description="Disordered" evidence="2">
    <location>
        <begin position="120"/>
        <end position="140"/>
    </location>
</feature>
<feature type="region of interest" description="Disordered" evidence="2">
    <location>
        <begin position="500"/>
        <end position="522"/>
    </location>
</feature>
<feature type="compositionally biased region" description="Low complexity" evidence="2">
    <location>
        <begin position="123"/>
        <end position="139"/>
    </location>
</feature>
<name>OCA5_LACTC</name>
<reference key="1">
    <citation type="journal article" date="2009" name="Genome Res.">
        <title>Comparative genomics of protoploid Saccharomycetaceae.</title>
        <authorList>
            <consortium name="The Genolevures Consortium"/>
            <person name="Souciet J.-L."/>
            <person name="Dujon B."/>
            <person name="Gaillardin C."/>
            <person name="Johnston M."/>
            <person name="Baret P.V."/>
            <person name="Cliften P."/>
            <person name="Sherman D.J."/>
            <person name="Weissenbach J."/>
            <person name="Westhof E."/>
            <person name="Wincker P."/>
            <person name="Jubin C."/>
            <person name="Poulain J."/>
            <person name="Barbe V."/>
            <person name="Segurens B."/>
            <person name="Artiguenave F."/>
            <person name="Anthouard V."/>
            <person name="Vacherie B."/>
            <person name="Val M.-E."/>
            <person name="Fulton R.S."/>
            <person name="Minx P."/>
            <person name="Wilson R."/>
            <person name="Durrens P."/>
            <person name="Jean G."/>
            <person name="Marck C."/>
            <person name="Martin T."/>
            <person name="Nikolski M."/>
            <person name="Rolland T."/>
            <person name="Seret M.-L."/>
            <person name="Casaregola S."/>
            <person name="Despons L."/>
            <person name="Fairhead C."/>
            <person name="Fischer G."/>
            <person name="Lafontaine I."/>
            <person name="Leh V."/>
            <person name="Lemaire M."/>
            <person name="de Montigny J."/>
            <person name="Neuveglise C."/>
            <person name="Thierry A."/>
            <person name="Blanc-Lenfle I."/>
            <person name="Bleykasten C."/>
            <person name="Diffels J."/>
            <person name="Fritsch E."/>
            <person name="Frangeul L."/>
            <person name="Goeffon A."/>
            <person name="Jauniaux N."/>
            <person name="Kachouri-Lafond R."/>
            <person name="Payen C."/>
            <person name="Potier S."/>
            <person name="Pribylova L."/>
            <person name="Ozanne C."/>
            <person name="Richard G.-F."/>
            <person name="Sacerdot C."/>
            <person name="Straub M.-L."/>
            <person name="Talla E."/>
        </authorList>
    </citation>
    <scope>NUCLEOTIDE SEQUENCE [LARGE SCALE GENOMIC DNA]</scope>
    <source>
        <strain>ATCC 56472 / CBS 6340 / NRRL Y-8284</strain>
    </source>
</reference>
<comment type="subcellular location">
    <subcellularLocation>
        <location evidence="1">Cytoplasm</location>
    </subcellularLocation>
</comment>
<comment type="similarity">
    <text evidence="3">Belongs to the OCA5 family.</text>
</comment>
<dbReference type="EMBL" id="CU928169">
    <property type="protein sequence ID" value="CAR23302.1"/>
    <property type="molecule type" value="Genomic_DNA"/>
</dbReference>
<dbReference type="RefSeq" id="XP_002553739.1">
    <property type="nucleotide sequence ID" value="XM_002553693.1"/>
</dbReference>
<dbReference type="FunCoup" id="C5DHP1">
    <property type="interactions" value="59"/>
</dbReference>
<dbReference type="STRING" id="559295.C5DHP1"/>
<dbReference type="GeneID" id="8291892"/>
<dbReference type="KEGG" id="lth:KLTH0E05918g"/>
<dbReference type="eggNOG" id="ENOG502QVXN">
    <property type="taxonomic scope" value="Eukaryota"/>
</dbReference>
<dbReference type="HOGENOM" id="CLU_028817_0_0_1"/>
<dbReference type="InParanoid" id="C5DHP1"/>
<dbReference type="OMA" id="LRFKVWP"/>
<dbReference type="OrthoDB" id="27140at2759"/>
<dbReference type="Proteomes" id="UP000002036">
    <property type="component" value="Chromosome E"/>
</dbReference>
<dbReference type="GO" id="GO:0005737">
    <property type="term" value="C:cytoplasm"/>
    <property type="evidence" value="ECO:0007669"/>
    <property type="project" value="UniProtKB-SubCell"/>
</dbReference>
<dbReference type="Gene3D" id="1.10.472.80">
    <property type="entry name" value="Ypt/Rab-GAP domain of gyp1p, domain 3"/>
    <property type="match status" value="1"/>
</dbReference>
<dbReference type="InterPro" id="IPR000195">
    <property type="entry name" value="Rab-GAP-TBC_dom"/>
</dbReference>
<dbReference type="InterPro" id="IPR035969">
    <property type="entry name" value="Rab-GAP_TBC_sf"/>
</dbReference>
<dbReference type="SMART" id="SM00164">
    <property type="entry name" value="TBC"/>
    <property type="match status" value="1"/>
</dbReference>
<dbReference type="SUPFAM" id="SSF47923">
    <property type="entry name" value="Ypt/Rab-GAP domain of gyp1p"/>
    <property type="match status" value="1"/>
</dbReference>
<proteinExistence type="inferred from homology"/>
<gene>
    <name type="primary">OCA5</name>
    <name type="ordered locus">KLTH0E05918g</name>
</gene>
<accession>C5DHP1</accession>
<organism>
    <name type="scientific">Lachancea thermotolerans (strain ATCC 56472 / CBS 6340 / NRRL Y-8284)</name>
    <name type="common">Yeast</name>
    <name type="synonym">Kluyveromyces thermotolerans</name>
    <dbReference type="NCBI Taxonomy" id="559295"/>
    <lineage>
        <taxon>Eukaryota</taxon>
        <taxon>Fungi</taxon>
        <taxon>Dikarya</taxon>
        <taxon>Ascomycota</taxon>
        <taxon>Saccharomycotina</taxon>
        <taxon>Saccharomycetes</taxon>
        <taxon>Saccharomycetales</taxon>
        <taxon>Saccharomycetaceae</taxon>
        <taxon>Lachancea</taxon>
    </lineage>
</organism>
<sequence>MTDRKTLVHSHLHWRNVKRKHWQKDLVAKVVELIKVGDHDALALVARTAGIPPQLRKHVWPVLLKFHPMVVSPNIMSNTLVWDSQHQKWHYHPEIRSEDEIRDQMAHDLGKYFHKRTSAGKRAQSAASGPGAAPGGDLSPLPPGQQRVVAALQQCILKFLQKWAQFFKYESGLAWIALALAEWCPLDGGEDVLPGKRHGAPVNLYHEYFLPEEIRDQLPSESEFAFDELFERLVLVILHSPDIPKAERLARAESEMTSVLQYYPVISGGDLSFQCQLFFKVFSVILPELYQPVSDEETLRPSKKTNWMYWWFKCSGARVFHKQDRARIWDTLLGWRPHPRSLNFYLNYNSKLFDHLYSTRTSSALDSEFFHKICKYGHDAFWFPDLDSLSLGSQDLKCDFQVLSELVRRNKYDNSDDELEITPKNNGTVGSKIKKGVEIPFSLLDPHVQLIFIYMAILQQHEFKLLEFEEAEISEFFNNVPSLSRADDHNYRSLYEEEIESRSVSSSETEPEDLFKRPGSSASTPHMLIEVGDDDKASKSFDDLYNLAGDIWRKWIWRELEDNAGT</sequence>
<evidence type="ECO:0000250" key="1"/>
<evidence type="ECO:0000256" key="2">
    <source>
        <dbReference type="SAM" id="MobiDB-lite"/>
    </source>
</evidence>
<evidence type="ECO:0000305" key="3"/>
<protein>
    <recommendedName>
        <fullName>Oxidant-induced cell-cycle arrest protein 5</fullName>
    </recommendedName>
</protein>
<keyword id="KW-0963">Cytoplasm</keyword>
<keyword id="KW-1185">Reference proteome</keyword>